<proteinExistence type="evidence at protein level"/>
<sequence>MSLHGKRKEIYKYEAPWTVYAMNWSVRPDKRFRLALGSFVEEYNNKVQLVGLDEESSEFICRNTFDHPYPTTKLMWIPDTKGVYPDLLATSGDYLRVWRVGETETRLECLLNNNKNSDFCAPLTSFDWNEVDPYLLGTSSIDTTCTIWGLETGQVLGRVNLVSGHVKTQLIAHDKEVYDIAFSRAGGGRDMFASVGADGSVRMFDLRHLEHSTIIYEDPQHHPLLRLCWNKQDPNYLATMAMDGMEVVILDVRVPCTPVARLNNHRACVNGIAWAPHSSCHICTAADDHQALIWDIQQMPRAIEDPILAYTAEGEINNVQWASTQPDWIAICYNNCLEILRV</sequence>
<gene>
    <name type="primary">DCAF7</name>
    <name type="synonym">HAN11</name>
    <name type="synonym">WDR68</name>
</gene>
<feature type="chain" id="PRO_0000051425" description="DDB1- and CUL4-associated factor 7">
    <location>
        <begin position="1"/>
        <end position="342"/>
    </location>
</feature>
<feature type="repeat" description="WD 1">
    <location>
        <begin position="6"/>
        <end position="52"/>
    </location>
</feature>
<feature type="repeat" description="WD 2">
    <location>
        <begin position="60"/>
        <end position="100"/>
    </location>
</feature>
<feature type="repeat" description="WD 3">
    <location>
        <begin position="108"/>
        <end position="150"/>
    </location>
</feature>
<feature type="repeat" description="WD 4">
    <location>
        <begin position="165"/>
        <end position="206"/>
    </location>
</feature>
<feature type="repeat" description="WD 5">
    <location>
        <begin position="213"/>
        <end position="252"/>
    </location>
</feature>
<feature type="repeat" description="WD 6">
    <location>
        <begin position="257"/>
        <end position="296"/>
    </location>
</feature>
<feature type="repeat" description="WD 7">
    <location>
        <begin position="303"/>
        <end position="342"/>
    </location>
</feature>
<feature type="splice variant" id="VSP_054015" description="In isoform 2." evidence="7">
    <location>
        <begin position="47"/>
        <end position="246"/>
    </location>
</feature>
<name>DCAF7_HUMAN</name>
<keyword id="KW-0025">Alternative splicing</keyword>
<keyword id="KW-0963">Cytoplasm</keyword>
<keyword id="KW-0217">Developmental protein</keyword>
<keyword id="KW-0539">Nucleus</keyword>
<keyword id="KW-1267">Proteomics identification</keyword>
<keyword id="KW-1185">Reference proteome</keyword>
<keyword id="KW-0677">Repeat</keyword>
<keyword id="KW-0833">Ubl conjugation pathway</keyword>
<keyword id="KW-0853">WD repeat</keyword>
<comment type="function">
    <text evidence="1 3 4">Involved in craniofacial development. Acts upstream of the EDN1 pathway and is required for formation of the upper jaw equivalent, the palatoquadrate. The activity required for EDN1 pathway function differs between the first and second arches (By similarity). Associates with DIAPH1 and controls GLI1 transcriptional activity. Could be involved in normal and disease skin development. May function as a substrate receptor for CUL4-DDB1 E3 ubiquitin-protein ligase complex.</text>
</comment>
<comment type="pathway">
    <text>Protein modification; protein ubiquitination.</text>
</comment>
<comment type="subunit">
    <text evidence="2 3 4 5 6">Interacts with DYRK1A, DYRK1B and DIAPH1. Interacts with DDB1. Interacts with ZNF703. Interacts with human adenovirus 5 E1A protein (PubMed:23864635).</text>
</comment>
<comment type="interaction">
    <interactant intactId="EBI-359808">
        <id>P61962</id>
    </interactant>
    <interactant intactId="EBI-11954292">
        <id>Q86V38</id>
        <label>ATN1</label>
    </interactant>
    <organismsDiffer>false</organismsDiffer>
    <experiments>3</experiments>
</comment>
<comment type="interaction">
    <interactant intactId="EBI-359808">
        <id>P61962</id>
    </interactant>
    <interactant intactId="EBI-718729">
        <id>P55212</id>
        <label>CASP6</label>
    </interactant>
    <organismsDiffer>false</organismsDiffer>
    <experiments>3</experiments>
</comment>
<comment type="interaction">
    <interactant intactId="EBI-359808">
        <id>P61962</id>
    </interactant>
    <interactant intactId="EBI-1053596">
        <id>Q13627</id>
        <label>DYRK1A</label>
    </interactant>
    <organismsDiffer>false</organismsDiffer>
    <experiments>14</experiments>
</comment>
<comment type="interaction">
    <interactant intactId="EBI-359808">
        <id>P61962</id>
    </interactant>
    <interactant intactId="EBI-634187">
        <id>Q9Y463</id>
        <label>DYRK1B</label>
    </interactant>
    <organismsDiffer>false</organismsDiffer>
    <experiments>7</experiments>
</comment>
<comment type="interaction">
    <interactant intactId="EBI-359808">
        <id>P61962</id>
    </interactant>
    <interactant intactId="EBI-348345">
        <id>Q9H2X6</id>
        <label>HIPK2</label>
    </interactant>
    <organismsDiffer>false</organismsDiffer>
    <experiments>11</experiments>
</comment>
<comment type="interaction">
    <interactant intactId="EBI-359808">
        <id>P61962</id>
    </interactant>
    <interactant intactId="EBI-466029">
        <id>P42858</id>
        <label>HTT</label>
    </interactant>
    <organismsDiffer>false</organismsDiffer>
    <experiments>10</experiments>
</comment>
<comment type="interaction">
    <interactant intactId="EBI-359808">
        <id>P61962</id>
    </interactant>
    <interactant intactId="EBI-2432309">
        <id>Q92876</id>
        <label>KLK6</label>
    </interactant>
    <organismsDiffer>false</organismsDiffer>
    <experiments>3</experiments>
</comment>
<comment type="interaction">
    <interactant intactId="EBI-359808">
        <id>P61962</id>
    </interactant>
    <interactant intactId="EBI-21591415">
        <id>P13473-2</id>
        <label>LAMP2</label>
    </interactant>
    <organismsDiffer>false</organismsDiffer>
    <experiments>3</experiments>
</comment>
<comment type="interaction">
    <interactant intactId="EBI-359808">
        <id>P61962</id>
    </interactant>
    <interactant intactId="EBI-49776">
        <id>Q13233</id>
        <label>MAP3K1</label>
    </interactant>
    <organismsDiffer>false</organismsDiffer>
    <experiments>7</experiments>
</comment>
<comment type="interaction">
    <interactant intactId="EBI-359808">
        <id>P61962</id>
    </interactant>
    <interactant intactId="EBI-21251460">
        <id>O60260-5</id>
        <label>PRKN</label>
    </interactant>
    <organismsDiffer>false</organismsDiffer>
    <experiments>3</experiments>
</comment>
<comment type="interaction">
    <interactant intactId="EBI-359808">
        <id>P61962</id>
    </interactant>
    <interactant intactId="EBI-372899">
        <id>Q13148</id>
        <label>TARDBP</label>
    </interactant>
    <organismsDiffer>false</organismsDiffer>
    <experiments>3</experiments>
</comment>
<comment type="subcellular location">
    <subcellularLocation>
        <location>Cytoplasm</location>
    </subcellularLocation>
    <subcellularLocation>
        <location>Nucleus</location>
    </subcellularLocation>
    <text>Overexpression of DIAHP1 or active RHOA causes translocation from the nucleus to cytoplasm.</text>
</comment>
<comment type="alternative products">
    <event type="alternative splicing"/>
    <isoform>
        <id>P61962-1</id>
        <name>1</name>
        <sequence type="displayed"/>
    </isoform>
    <isoform>
        <id>P61962-2</id>
        <name>2</name>
        <sequence type="described" ref="VSP_054015"/>
    </isoform>
</comment>
<comment type="similarity">
    <text evidence="8">Belongs to the WD repeat DCAF7 family.</text>
</comment>
<evidence type="ECO:0000250" key="1"/>
<evidence type="ECO:0000269" key="2">
    <source>
    </source>
</evidence>
<evidence type="ECO:0000269" key="3">
    <source>
    </source>
</evidence>
<evidence type="ECO:0000269" key="4">
    <source>
    </source>
</evidence>
<evidence type="ECO:0000269" key="5">
    <source>
    </source>
</evidence>
<evidence type="ECO:0000269" key="6">
    <source>
    </source>
</evidence>
<evidence type="ECO:0000303" key="7">
    <source>
    </source>
</evidence>
<evidence type="ECO:0000305" key="8"/>
<accession>P61962</accession>
<accession>B4E039</accession>
<accession>D3DU14</accession>
<accession>O15491</accession>
<accession>Q9DAE4</accession>
<protein>
    <recommendedName>
        <fullName>DDB1- and CUL4-associated factor 7</fullName>
    </recommendedName>
    <alternativeName>
        <fullName>WD repeat-containing protein 68</fullName>
    </alternativeName>
    <alternativeName>
        <fullName>WD repeat-containing protein An11 homolog</fullName>
    </alternativeName>
</protein>
<organism>
    <name type="scientific">Homo sapiens</name>
    <name type="common">Human</name>
    <dbReference type="NCBI Taxonomy" id="9606"/>
    <lineage>
        <taxon>Eukaryota</taxon>
        <taxon>Metazoa</taxon>
        <taxon>Chordata</taxon>
        <taxon>Craniata</taxon>
        <taxon>Vertebrata</taxon>
        <taxon>Euteleostomi</taxon>
        <taxon>Mammalia</taxon>
        <taxon>Eutheria</taxon>
        <taxon>Euarchontoglires</taxon>
        <taxon>Primates</taxon>
        <taxon>Haplorrhini</taxon>
        <taxon>Catarrhini</taxon>
        <taxon>Hominidae</taxon>
        <taxon>Homo</taxon>
    </lineage>
</organism>
<dbReference type="EMBL" id="U94747">
    <property type="protein sequence ID" value="AAC18913.1"/>
    <property type="molecule type" value="mRNA"/>
</dbReference>
<dbReference type="EMBL" id="AK303212">
    <property type="protein sequence ID" value="BAG64301.1"/>
    <property type="molecule type" value="mRNA"/>
</dbReference>
<dbReference type="EMBL" id="AC113554">
    <property type="status" value="NOT_ANNOTATED_CDS"/>
    <property type="molecule type" value="Genomic_DNA"/>
</dbReference>
<dbReference type="EMBL" id="CH471109">
    <property type="protein sequence ID" value="EAW94305.1"/>
    <property type="molecule type" value="Genomic_DNA"/>
</dbReference>
<dbReference type="EMBL" id="CH471109">
    <property type="protein sequence ID" value="EAW94306.1"/>
    <property type="molecule type" value="Genomic_DNA"/>
</dbReference>
<dbReference type="EMBL" id="BC001264">
    <property type="protein sequence ID" value="AAH01264.1"/>
    <property type="molecule type" value="mRNA"/>
</dbReference>
<dbReference type="CCDS" id="CCDS74127.1">
    <molecule id="P61962-1"/>
</dbReference>
<dbReference type="RefSeq" id="NP_005819.3">
    <molecule id="P61962-1"/>
    <property type="nucleotide sequence ID" value="NM_005828.5"/>
</dbReference>
<dbReference type="SMR" id="P61962"/>
<dbReference type="BioGRID" id="115532">
    <property type="interactions" value="380"/>
</dbReference>
<dbReference type="ComplexPortal" id="CPX-2785">
    <property type="entry name" value="CRL4-DCAF7 E3 ubiquitin ligase complex, CUL4A variant"/>
</dbReference>
<dbReference type="ComplexPortal" id="CPX-2786">
    <property type="entry name" value="CRL4-DCAF7 E3 ubiquitin ligase complex, CUL4B variant"/>
</dbReference>
<dbReference type="DIP" id="DIP-40363N"/>
<dbReference type="FunCoup" id="P61962">
    <property type="interactions" value="4125"/>
</dbReference>
<dbReference type="IntAct" id="P61962">
    <property type="interactions" value="222"/>
</dbReference>
<dbReference type="MINT" id="P61962"/>
<dbReference type="STRING" id="9606.ENSP00000483236"/>
<dbReference type="GlyGen" id="P61962">
    <property type="glycosylation" value="1 site, 1 O-linked glycan (1 site)"/>
</dbReference>
<dbReference type="iPTMnet" id="P61962"/>
<dbReference type="PhosphoSitePlus" id="P61962"/>
<dbReference type="SwissPalm" id="P61962"/>
<dbReference type="BioMuta" id="DCAF7"/>
<dbReference type="DMDM" id="48428729"/>
<dbReference type="jPOST" id="P61962"/>
<dbReference type="MassIVE" id="P61962"/>
<dbReference type="PaxDb" id="9606-ENSP00000483236"/>
<dbReference type="PeptideAtlas" id="P61962"/>
<dbReference type="ProteomicsDB" id="5647"/>
<dbReference type="ProteomicsDB" id="57346">
    <molecule id="P61962-1"/>
</dbReference>
<dbReference type="Pumba" id="P61962"/>
<dbReference type="Antibodypedia" id="9425">
    <property type="antibodies" value="186 antibodies from 27 providers"/>
</dbReference>
<dbReference type="DNASU" id="10238"/>
<dbReference type="Ensembl" id="ENST00000415273.2">
    <molecule id="P61962-2"/>
    <property type="protein sequence ID" value="ENSP00000403920.2"/>
    <property type="gene ID" value="ENSG00000136485.16"/>
</dbReference>
<dbReference type="Ensembl" id="ENST00000431926.7">
    <molecule id="P61962-1"/>
    <property type="protein sequence ID" value="ENSP00000402312.2"/>
    <property type="gene ID" value="ENSG00000136485.16"/>
</dbReference>
<dbReference type="Ensembl" id="ENST00000614556.5">
    <molecule id="P61962-1"/>
    <property type="protein sequence ID" value="ENSP00000483236.1"/>
    <property type="gene ID" value="ENSG00000136485.16"/>
</dbReference>
<dbReference type="Ensembl" id="ENST00000686337.1">
    <molecule id="P61962-1"/>
    <property type="protein sequence ID" value="ENSP00000508930.1"/>
    <property type="gene ID" value="ENSG00000136485.16"/>
</dbReference>
<dbReference type="Ensembl" id="ENST00000690417.1">
    <molecule id="P61962-1"/>
    <property type="protein sequence ID" value="ENSP00000509006.1"/>
    <property type="gene ID" value="ENSG00000136485.16"/>
</dbReference>
<dbReference type="GeneID" id="10238"/>
<dbReference type="KEGG" id="hsa:10238"/>
<dbReference type="MANE-Select" id="ENST00000614556.5">
    <property type="protein sequence ID" value="ENSP00000483236.1"/>
    <property type="RefSeq nucleotide sequence ID" value="NM_005828.5"/>
    <property type="RefSeq protein sequence ID" value="NP_005819.3"/>
</dbReference>
<dbReference type="UCSC" id="uc010wpn.5">
    <molecule id="P61962-1"/>
    <property type="organism name" value="human"/>
</dbReference>
<dbReference type="AGR" id="HGNC:30915"/>
<dbReference type="CTD" id="10238"/>
<dbReference type="DisGeNET" id="10238"/>
<dbReference type="GeneCards" id="DCAF7"/>
<dbReference type="HGNC" id="HGNC:30915">
    <property type="gene designation" value="DCAF7"/>
</dbReference>
<dbReference type="HPA" id="ENSG00000136485">
    <property type="expression patterns" value="Low tissue specificity"/>
</dbReference>
<dbReference type="MIM" id="605973">
    <property type="type" value="gene"/>
</dbReference>
<dbReference type="neXtProt" id="NX_P61962"/>
<dbReference type="OpenTargets" id="ENSG00000136485"/>
<dbReference type="PharmGKB" id="PA165431770"/>
<dbReference type="VEuPathDB" id="HostDB:ENSG00000136485"/>
<dbReference type="eggNOG" id="KOG0290">
    <property type="taxonomic scope" value="Eukaryota"/>
</dbReference>
<dbReference type="GeneTree" id="ENSGT00390000006939"/>
<dbReference type="HOGENOM" id="CLU_013694_0_0_1"/>
<dbReference type="InParanoid" id="P61962"/>
<dbReference type="OMA" id="TIAMDAC"/>
<dbReference type="OrthoDB" id="24670at2759"/>
<dbReference type="PAN-GO" id="P61962">
    <property type="GO annotations" value="1 GO annotation based on evolutionary models"/>
</dbReference>
<dbReference type="PhylomeDB" id="P61962"/>
<dbReference type="TreeFam" id="TF106135"/>
<dbReference type="PathwayCommons" id="P61962"/>
<dbReference type="Reactome" id="R-HSA-390471">
    <property type="pathway name" value="Association of TriC/CCT with target proteins during biosynthesis"/>
</dbReference>
<dbReference type="Reactome" id="R-HSA-8951664">
    <property type="pathway name" value="Neddylation"/>
</dbReference>
<dbReference type="SignaLink" id="P61962"/>
<dbReference type="SIGNOR" id="P61962"/>
<dbReference type="UniPathway" id="UPA00143"/>
<dbReference type="BioGRID-ORCS" id="10238">
    <property type="hits" value="106 hits in 420 CRISPR screens"/>
</dbReference>
<dbReference type="ChiTaRS" id="DCAF7">
    <property type="organism name" value="human"/>
</dbReference>
<dbReference type="GeneWiki" id="WDR68"/>
<dbReference type="GenomeRNAi" id="10238"/>
<dbReference type="Pharos" id="P61962">
    <property type="development level" value="Tbio"/>
</dbReference>
<dbReference type="PRO" id="PR:P61962"/>
<dbReference type="Proteomes" id="UP000005640">
    <property type="component" value="Chromosome 17"/>
</dbReference>
<dbReference type="RNAct" id="P61962">
    <property type="molecule type" value="protein"/>
</dbReference>
<dbReference type="Bgee" id="ENSG00000136485">
    <property type="expression patterns" value="Expressed in ventricular zone and 205 other cell types or tissues"/>
</dbReference>
<dbReference type="ExpressionAtlas" id="P61962">
    <property type="expression patterns" value="baseline and differential"/>
</dbReference>
<dbReference type="GO" id="GO:0080008">
    <property type="term" value="C:Cul4-RING E3 ubiquitin ligase complex"/>
    <property type="evidence" value="ECO:0000314"/>
    <property type="project" value="UniProtKB"/>
</dbReference>
<dbReference type="GO" id="GO:0005737">
    <property type="term" value="C:cytoplasm"/>
    <property type="evidence" value="ECO:0000304"/>
    <property type="project" value="UniProtKB"/>
</dbReference>
<dbReference type="GO" id="GO:0005829">
    <property type="term" value="C:cytosol"/>
    <property type="evidence" value="ECO:0000314"/>
    <property type="project" value="HPA"/>
</dbReference>
<dbReference type="GO" id="GO:0016604">
    <property type="term" value="C:nuclear body"/>
    <property type="evidence" value="ECO:0000314"/>
    <property type="project" value="HPA"/>
</dbReference>
<dbReference type="GO" id="GO:0016363">
    <property type="term" value="C:nuclear matrix"/>
    <property type="evidence" value="ECO:0000314"/>
    <property type="project" value="UniProtKB"/>
</dbReference>
<dbReference type="GO" id="GO:0005654">
    <property type="term" value="C:nucleoplasm"/>
    <property type="evidence" value="ECO:0000314"/>
    <property type="project" value="HPA"/>
</dbReference>
<dbReference type="GO" id="GO:0032991">
    <property type="term" value="C:protein-containing complex"/>
    <property type="evidence" value="ECO:0000314"/>
    <property type="project" value="UniProtKB"/>
</dbReference>
<dbReference type="GO" id="GO:0030674">
    <property type="term" value="F:protein-macromolecule adaptor activity"/>
    <property type="evidence" value="ECO:0000250"/>
    <property type="project" value="FlyBase"/>
</dbReference>
<dbReference type="GO" id="GO:0016567">
    <property type="term" value="P:protein ubiquitination"/>
    <property type="evidence" value="ECO:0007669"/>
    <property type="project" value="UniProtKB-UniPathway"/>
</dbReference>
<dbReference type="FunFam" id="2.130.10.10:FF:000049">
    <property type="entry name" value="DDB1-and CUL4-associated factor 7"/>
    <property type="match status" value="1"/>
</dbReference>
<dbReference type="Gene3D" id="2.130.10.10">
    <property type="entry name" value="YVTN repeat-like/Quinoprotein amine dehydrogenase"/>
    <property type="match status" value="1"/>
</dbReference>
<dbReference type="InterPro" id="IPR045159">
    <property type="entry name" value="DCAF7-like"/>
</dbReference>
<dbReference type="InterPro" id="IPR015943">
    <property type="entry name" value="WD40/YVTN_repeat-like_dom_sf"/>
</dbReference>
<dbReference type="InterPro" id="IPR019775">
    <property type="entry name" value="WD40_repeat_CS"/>
</dbReference>
<dbReference type="InterPro" id="IPR036322">
    <property type="entry name" value="WD40_repeat_dom_sf"/>
</dbReference>
<dbReference type="InterPro" id="IPR001680">
    <property type="entry name" value="WD40_rpt"/>
</dbReference>
<dbReference type="PANTHER" id="PTHR19919">
    <property type="entry name" value="WD REPEAT CONTAINING PROTEIN"/>
    <property type="match status" value="1"/>
</dbReference>
<dbReference type="Pfam" id="PF00400">
    <property type="entry name" value="WD40"/>
    <property type="match status" value="2"/>
</dbReference>
<dbReference type="SMART" id="SM00320">
    <property type="entry name" value="WD40"/>
    <property type="match status" value="5"/>
</dbReference>
<dbReference type="SUPFAM" id="SSF50978">
    <property type="entry name" value="WD40 repeat-like"/>
    <property type="match status" value="1"/>
</dbReference>
<dbReference type="PROSITE" id="PS00678">
    <property type="entry name" value="WD_REPEATS_1"/>
    <property type="match status" value="1"/>
</dbReference>
<dbReference type="PROSITE" id="PS50082">
    <property type="entry name" value="WD_REPEATS_2"/>
    <property type="match status" value="1"/>
</dbReference>
<dbReference type="PROSITE" id="PS50294">
    <property type="entry name" value="WD_REPEATS_REGION"/>
    <property type="match status" value="1"/>
</dbReference>
<reference key="1">
    <citation type="journal article" date="1997" name="Genes Dev.">
        <title>The an11 locus controlling flower pigmentation in petunia encodes a novel WD-repeat protein conserved in yeast, plants, and animals.</title>
        <authorList>
            <person name="de Vetten N."/>
            <person name="Quattrocchio F."/>
            <person name="Mol J."/>
            <person name="Koes R."/>
        </authorList>
    </citation>
    <scope>NUCLEOTIDE SEQUENCE [MRNA] (ISOFORM 1)</scope>
    <source>
        <tissue>Liver</tissue>
    </source>
</reference>
<reference key="2">
    <citation type="journal article" date="2004" name="Nat. Genet.">
        <title>Complete sequencing and characterization of 21,243 full-length human cDNAs.</title>
        <authorList>
            <person name="Ota T."/>
            <person name="Suzuki Y."/>
            <person name="Nishikawa T."/>
            <person name="Otsuki T."/>
            <person name="Sugiyama T."/>
            <person name="Irie R."/>
            <person name="Wakamatsu A."/>
            <person name="Hayashi K."/>
            <person name="Sato H."/>
            <person name="Nagai K."/>
            <person name="Kimura K."/>
            <person name="Makita H."/>
            <person name="Sekine M."/>
            <person name="Obayashi M."/>
            <person name="Nishi T."/>
            <person name="Shibahara T."/>
            <person name="Tanaka T."/>
            <person name="Ishii S."/>
            <person name="Yamamoto J."/>
            <person name="Saito K."/>
            <person name="Kawai Y."/>
            <person name="Isono Y."/>
            <person name="Nakamura Y."/>
            <person name="Nagahari K."/>
            <person name="Murakami K."/>
            <person name="Yasuda T."/>
            <person name="Iwayanagi T."/>
            <person name="Wagatsuma M."/>
            <person name="Shiratori A."/>
            <person name="Sudo H."/>
            <person name="Hosoiri T."/>
            <person name="Kaku Y."/>
            <person name="Kodaira H."/>
            <person name="Kondo H."/>
            <person name="Sugawara M."/>
            <person name="Takahashi M."/>
            <person name="Kanda K."/>
            <person name="Yokoi T."/>
            <person name="Furuya T."/>
            <person name="Kikkawa E."/>
            <person name="Omura Y."/>
            <person name="Abe K."/>
            <person name="Kamihara K."/>
            <person name="Katsuta N."/>
            <person name="Sato K."/>
            <person name="Tanikawa M."/>
            <person name="Yamazaki M."/>
            <person name="Ninomiya K."/>
            <person name="Ishibashi T."/>
            <person name="Yamashita H."/>
            <person name="Murakawa K."/>
            <person name="Fujimori K."/>
            <person name="Tanai H."/>
            <person name="Kimata M."/>
            <person name="Watanabe M."/>
            <person name="Hiraoka S."/>
            <person name="Chiba Y."/>
            <person name="Ishida S."/>
            <person name="Ono Y."/>
            <person name="Takiguchi S."/>
            <person name="Watanabe S."/>
            <person name="Yosida M."/>
            <person name="Hotuta T."/>
            <person name="Kusano J."/>
            <person name="Kanehori K."/>
            <person name="Takahashi-Fujii A."/>
            <person name="Hara H."/>
            <person name="Tanase T.-O."/>
            <person name="Nomura Y."/>
            <person name="Togiya S."/>
            <person name="Komai F."/>
            <person name="Hara R."/>
            <person name="Takeuchi K."/>
            <person name="Arita M."/>
            <person name="Imose N."/>
            <person name="Musashino K."/>
            <person name="Yuuki H."/>
            <person name="Oshima A."/>
            <person name="Sasaki N."/>
            <person name="Aotsuka S."/>
            <person name="Yoshikawa Y."/>
            <person name="Matsunawa H."/>
            <person name="Ichihara T."/>
            <person name="Shiohata N."/>
            <person name="Sano S."/>
            <person name="Moriya S."/>
            <person name="Momiyama H."/>
            <person name="Satoh N."/>
            <person name="Takami S."/>
            <person name="Terashima Y."/>
            <person name="Suzuki O."/>
            <person name="Nakagawa S."/>
            <person name="Senoh A."/>
            <person name="Mizoguchi H."/>
            <person name="Goto Y."/>
            <person name="Shimizu F."/>
            <person name="Wakebe H."/>
            <person name="Hishigaki H."/>
            <person name="Watanabe T."/>
            <person name="Sugiyama A."/>
            <person name="Takemoto M."/>
            <person name="Kawakami B."/>
            <person name="Yamazaki M."/>
            <person name="Watanabe K."/>
            <person name="Kumagai A."/>
            <person name="Itakura S."/>
            <person name="Fukuzumi Y."/>
            <person name="Fujimori Y."/>
            <person name="Komiyama M."/>
            <person name="Tashiro H."/>
            <person name="Tanigami A."/>
            <person name="Fujiwara T."/>
            <person name="Ono T."/>
            <person name="Yamada K."/>
            <person name="Fujii Y."/>
            <person name="Ozaki K."/>
            <person name="Hirao M."/>
            <person name="Ohmori Y."/>
            <person name="Kawabata A."/>
            <person name="Hikiji T."/>
            <person name="Kobatake N."/>
            <person name="Inagaki H."/>
            <person name="Ikema Y."/>
            <person name="Okamoto S."/>
            <person name="Okitani R."/>
            <person name="Kawakami T."/>
            <person name="Noguchi S."/>
            <person name="Itoh T."/>
            <person name="Shigeta K."/>
            <person name="Senba T."/>
            <person name="Matsumura K."/>
            <person name="Nakajima Y."/>
            <person name="Mizuno T."/>
            <person name="Morinaga M."/>
            <person name="Sasaki M."/>
            <person name="Togashi T."/>
            <person name="Oyama M."/>
            <person name="Hata H."/>
            <person name="Watanabe M."/>
            <person name="Komatsu T."/>
            <person name="Mizushima-Sugano J."/>
            <person name="Satoh T."/>
            <person name="Shirai Y."/>
            <person name="Takahashi Y."/>
            <person name="Nakagawa K."/>
            <person name="Okumura K."/>
            <person name="Nagase T."/>
            <person name="Nomura N."/>
            <person name="Kikuchi H."/>
            <person name="Masuho Y."/>
            <person name="Yamashita R."/>
            <person name="Nakai K."/>
            <person name="Yada T."/>
            <person name="Nakamura Y."/>
            <person name="Ohara O."/>
            <person name="Isogai T."/>
            <person name="Sugano S."/>
        </authorList>
    </citation>
    <scope>NUCLEOTIDE SEQUENCE [LARGE SCALE MRNA] (ISOFORM 2)</scope>
    <source>
        <tissue>Thymus</tissue>
    </source>
</reference>
<reference key="3">
    <citation type="journal article" date="2006" name="Nature">
        <title>DNA sequence of human chromosome 17 and analysis of rearrangement in the human lineage.</title>
        <authorList>
            <person name="Zody M.C."/>
            <person name="Garber M."/>
            <person name="Adams D.J."/>
            <person name="Sharpe T."/>
            <person name="Harrow J."/>
            <person name="Lupski J.R."/>
            <person name="Nicholson C."/>
            <person name="Searle S.M."/>
            <person name="Wilming L."/>
            <person name="Young S.K."/>
            <person name="Abouelleil A."/>
            <person name="Allen N.R."/>
            <person name="Bi W."/>
            <person name="Bloom T."/>
            <person name="Borowsky M.L."/>
            <person name="Bugalter B.E."/>
            <person name="Butler J."/>
            <person name="Chang J.L."/>
            <person name="Chen C.-K."/>
            <person name="Cook A."/>
            <person name="Corum B."/>
            <person name="Cuomo C.A."/>
            <person name="de Jong P.J."/>
            <person name="DeCaprio D."/>
            <person name="Dewar K."/>
            <person name="FitzGerald M."/>
            <person name="Gilbert J."/>
            <person name="Gibson R."/>
            <person name="Gnerre S."/>
            <person name="Goldstein S."/>
            <person name="Grafham D.V."/>
            <person name="Grocock R."/>
            <person name="Hafez N."/>
            <person name="Hagopian D.S."/>
            <person name="Hart E."/>
            <person name="Norman C.H."/>
            <person name="Humphray S."/>
            <person name="Jaffe D.B."/>
            <person name="Jones M."/>
            <person name="Kamal M."/>
            <person name="Khodiyar V.K."/>
            <person name="LaButti K."/>
            <person name="Laird G."/>
            <person name="Lehoczky J."/>
            <person name="Liu X."/>
            <person name="Lokyitsang T."/>
            <person name="Loveland J."/>
            <person name="Lui A."/>
            <person name="Macdonald P."/>
            <person name="Major J.E."/>
            <person name="Matthews L."/>
            <person name="Mauceli E."/>
            <person name="McCarroll S.A."/>
            <person name="Mihalev A.H."/>
            <person name="Mudge J."/>
            <person name="Nguyen C."/>
            <person name="Nicol R."/>
            <person name="O'Leary S.B."/>
            <person name="Osoegawa K."/>
            <person name="Schwartz D.C."/>
            <person name="Shaw-Smith C."/>
            <person name="Stankiewicz P."/>
            <person name="Steward C."/>
            <person name="Swarbreck D."/>
            <person name="Venkataraman V."/>
            <person name="Whittaker C.A."/>
            <person name="Yang X."/>
            <person name="Zimmer A.R."/>
            <person name="Bradley A."/>
            <person name="Hubbard T."/>
            <person name="Birren B.W."/>
            <person name="Rogers J."/>
            <person name="Lander E.S."/>
            <person name="Nusbaum C."/>
        </authorList>
    </citation>
    <scope>NUCLEOTIDE SEQUENCE [LARGE SCALE GENOMIC DNA]</scope>
</reference>
<reference key="4">
    <citation type="submission" date="2005-09" db="EMBL/GenBank/DDBJ databases">
        <authorList>
            <person name="Mural R.J."/>
            <person name="Istrail S."/>
            <person name="Sutton G.G."/>
            <person name="Florea L."/>
            <person name="Halpern A.L."/>
            <person name="Mobarry C.M."/>
            <person name="Lippert R."/>
            <person name="Walenz B."/>
            <person name="Shatkay H."/>
            <person name="Dew I."/>
            <person name="Miller J.R."/>
            <person name="Flanigan M.J."/>
            <person name="Edwards N.J."/>
            <person name="Bolanos R."/>
            <person name="Fasulo D."/>
            <person name="Halldorsson B.V."/>
            <person name="Hannenhalli S."/>
            <person name="Turner R."/>
            <person name="Yooseph S."/>
            <person name="Lu F."/>
            <person name="Nusskern D.R."/>
            <person name="Shue B.C."/>
            <person name="Zheng X.H."/>
            <person name="Zhong F."/>
            <person name="Delcher A.L."/>
            <person name="Huson D.H."/>
            <person name="Kravitz S.A."/>
            <person name="Mouchard L."/>
            <person name="Reinert K."/>
            <person name="Remington K.A."/>
            <person name="Clark A.G."/>
            <person name="Waterman M.S."/>
            <person name="Eichler E.E."/>
            <person name="Adams M.D."/>
            <person name="Hunkapiller M.W."/>
            <person name="Myers E.W."/>
            <person name="Venter J.C."/>
        </authorList>
    </citation>
    <scope>NUCLEOTIDE SEQUENCE [LARGE SCALE GENOMIC DNA]</scope>
</reference>
<reference key="5">
    <citation type="journal article" date="2004" name="Genome Res.">
        <title>The status, quality, and expansion of the NIH full-length cDNA project: the Mammalian Gene Collection (MGC).</title>
        <authorList>
            <consortium name="The MGC Project Team"/>
        </authorList>
    </citation>
    <scope>NUCLEOTIDE SEQUENCE [LARGE SCALE MRNA] (ISOFORM 1)</scope>
    <source>
        <tissue>Cervix</tissue>
    </source>
</reference>
<reference key="6">
    <citation type="journal article" date="2004" name="J. Biol. Chem.">
        <title>Phosphorylation of Ser640 in muscle glycogen synthase by DYRK family protein kinases.</title>
        <authorList>
            <person name="Skurat A.V."/>
            <person name="Dietrich A.D."/>
        </authorList>
    </citation>
    <scope>INTERACTION WITH DYRK1A AND DYRK1B</scope>
</reference>
<reference key="7">
    <citation type="journal article" date="2006" name="J. Dermatol. Sci.">
        <title>HAN11 binds mDia1 and controls GLI1 transcriptional activity.</title>
        <authorList>
            <person name="Morita K."/>
            <person name="Lo Celso C."/>
            <person name="Spencer-Dene B."/>
            <person name="Zouboulis C.C."/>
            <person name="Watt F.M."/>
        </authorList>
    </citation>
    <scope>SUBCELLULAR LOCATION</scope>
    <scope>INTERACTION WITH DIAPH1 AND DYRK1A</scope>
    <scope>FUNCTION</scope>
</reference>
<reference key="8">
    <citation type="journal article" date="2006" name="Mol. Cell">
        <title>A family of diverse Cul4-Ddb1-interacting proteins includes Cdt2, which is required for S phase destruction of the replication factor Cdt1.</title>
        <authorList>
            <person name="Jin J."/>
            <person name="Arias E.E."/>
            <person name="Chen J."/>
            <person name="Harper J.W."/>
            <person name="Walter J.C."/>
        </authorList>
    </citation>
    <scope>FUNCTION</scope>
    <scope>INTERACTION WITH DDB1</scope>
    <scope>IDENTIFICATION BY MASS SPECTROMETRY</scope>
</reference>
<reference key="9">
    <citation type="journal article" date="2011" name="BMC Syst. Biol.">
        <title>Initial characterization of the human central proteome.</title>
        <authorList>
            <person name="Burkard T.R."/>
            <person name="Planyavsky M."/>
            <person name="Kaupe I."/>
            <person name="Breitwieser F.P."/>
            <person name="Buerckstuemmer T."/>
            <person name="Bennett K.L."/>
            <person name="Superti-Furga G."/>
            <person name="Colinge J."/>
        </authorList>
    </citation>
    <scope>IDENTIFICATION BY MASS SPECTROMETRY [LARGE SCALE ANALYSIS]</scope>
</reference>
<reference key="10">
    <citation type="journal article" date="2011" name="EMBO Mol. Med.">
        <title>ZNF703 gene amplification at 8p12 specifies luminal B breast cancer.</title>
        <authorList>
            <person name="Sircoulomb F."/>
            <person name="Nicolas N."/>
            <person name="Ferrari A."/>
            <person name="Finetti P."/>
            <person name="Bekhouche I."/>
            <person name="Rousselet E."/>
            <person name="Lonigro A."/>
            <person name="Adelaide J."/>
            <person name="Baudelet E."/>
            <person name="Esteyries S."/>
            <person name="Wicinski J."/>
            <person name="Audebert S."/>
            <person name="Charafe-Jauffret E."/>
            <person name="Jacquemier J."/>
            <person name="Lopez M."/>
            <person name="Borg J.P."/>
            <person name="Sotiriou C."/>
            <person name="Popovici C."/>
            <person name="Bertucci F."/>
            <person name="Birnbaum D."/>
            <person name="Chaffanet M."/>
            <person name="Ginestier C."/>
        </authorList>
    </citation>
    <scope>INTERACTION WITH ZNF703</scope>
    <scope>SUBCELLULAR LOCATION</scope>
</reference>
<reference key="11">
    <citation type="journal article" date="2013" name="J. Virol.">
        <title>Dissection of the C-terminal region of E1A redefines the roles of CtBP and other cellular targets in oncogenic transformation.</title>
        <authorList>
            <person name="Cohen M.J."/>
            <person name="Yousef A.F."/>
            <person name="Massimi P."/>
            <person name="Fonseca G.J."/>
            <person name="Todorovic B."/>
            <person name="Pelka P."/>
            <person name="Turnell A.S."/>
            <person name="Banks L."/>
            <person name="Mymryk J.S."/>
        </authorList>
    </citation>
    <scope>INTERACTION WITH HADV5 E1A</scope>
</reference>